<keyword id="KW-0414">Isoprene biosynthesis</keyword>
<keyword id="KW-0456">Lyase</keyword>
<keyword id="KW-0479">Metal-binding</keyword>
<feature type="chain" id="PRO_1000094249" description="2-C-methyl-D-erythritol 2,4-cyclodiphosphate synthase">
    <location>
        <begin position="1"/>
        <end position="178"/>
    </location>
</feature>
<feature type="binding site" evidence="1">
    <location>
        <begin position="24"/>
        <end position="26"/>
    </location>
    <ligand>
        <name>4-CDP-2-C-methyl-D-erythritol 2-phosphate</name>
        <dbReference type="ChEBI" id="CHEBI:57919"/>
    </ligand>
</feature>
<feature type="binding site" evidence="1">
    <location>
        <position position="24"/>
    </location>
    <ligand>
        <name>a divalent metal cation</name>
        <dbReference type="ChEBI" id="CHEBI:60240"/>
    </ligand>
</feature>
<feature type="binding site" evidence="1">
    <location>
        <position position="26"/>
    </location>
    <ligand>
        <name>a divalent metal cation</name>
        <dbReference type="ChEBI" id="CHEBI:60240"/>
    </ligand>
</feature>
<feature type="binding site" evidence="1">
    <location>
        <position position="61"/>
    </location>
    <ligand>
        <name>a divalent metal cation</name>
        <dbReference type="ChEBI" id="CHEBI:60240"/>
    </ligand>
</feature>
<feature type="binding site" evidence="1">
    <location>
        <begin position="150"/>
        <end position="153"/>
    </location>
    <ligand>
        <name>4-CDP-2-C-methyl-D-erythritol 2-phosphate</name>
        <dbReference type="ChEBI" id="CHEBI:57919"/>
    </ligand>
</feature>
<feature type="site" description="Transition state stabilizer" evidence="1">
    <location>
        <position position="53"/>
    </location>
</feature>
<feature type="site" description="Transition state stabilizer" evidence="1">
    <location>
        <position position="151"/>
    </location>
</feature>
<comment type="function">
    <text evidence="1">Involved in the biosynthesis of isopentenyl diphosphate (IPP) and dimethylallyl diphosphate (DMAPP), two major building blocks of isoprenoid compounds. Catalyzes the conversion of 4-diphosphocytidyl-2-C-methyl-D-erythritol 2-phosphate (CDP-ME2P) to 2-C-methyl-D-erythritol 2,4-cyclodiphosphate (ME-CPP) with a corresponding release of cytidine 5-monophosphate (CMP).</text>
</comment>
<comment type="catalytic activity">
    <reaction evidence="1">
        <text>4-CDP-2-C-methyl-D-erythritol 2-phosphate = 2-C-methyl-D-erythritol 2,4-cyclic diphosphate + CMP</text>
        <dbReference type="Rhea" id="RHEA:23864"/>
        <dbReference type="ChEBI" id="CHEBI:57919"/>
        <dbReference type="ChEBI" id="CHEBI:58483"/>
        <dbReference type="ChEBI" id="CHEBI:60377"/>
        <dbReference type="EC" id="4.6.1.12"/>
    </reaction>
</comment>
<comment type="cofactor">
    <cofactor evidence="1">
        <name>a divalent metal cation</name>
        <dbReference type="ChEBI" id="CHEBI:60240"/>
    </cofactor>
    <text evidence="1">Binds 1 divalent metal cation per subunit.</text>
</comment>
<comment type="pathway">
    <text evidence="1">Isoprenoid biosynthesis; isopentenyl diphosphate biosynthesis via DXP pathway; isopentenyl diphosphate from 1-deoxy-D-xylulose 5-phosphate: step 4/6.</text>
</comment>
<comment type="subunit">
    <text evidence="1">Homotrimer.</text>
</comment>
<comment type="similarity">
    <text evidence="1">Belongs to the IspF family.</text>
</comment>
<name>ISPF_CHLT2</name>
<protein>
    <recommendedName>
        <fullName evidence="1">2-C-methyl-D-erythritol 2,4-cyclodiphosphate synthase</fullName>
        <shortName evidence="1">MECDP-synthase</shortName>
        <shortName evidence="1">MECPP-synthase</shortName>
        <shortName evidence="1">MECPS</shortName>
        <ecNumber evidence="1">4.6.1.12</ecNumber>
    </recommendedName>
</protein>
<organism>
    <name type="scientific">Chlamydia trachomatis serovar L2 (strain ATCC VR-902B / DSM 19102 / 434/Bu)</name>
    <dbReference type="NCBI Taxonomy" id="471472"/>
    <lineage>
        <taxon>Bacteria</taxon>
        <taxon>Pseudomonadati</taxon>
        <taxon>Chlamydiota</taxon>
        <taxon>Chlamydiia</taxon>
        <taxon>Chlamydiales</taxon>
        <taxon>Chlamydiaceae</taxon>
        <taxon>Chlamydia/Chlamydophila group</taxon>
        <taxon>Chlamydia</taxon>
    </lineage>
</organism>
<proteinExistence type="inferred from homology"/>
<gene>
    <name evidence="1" type="primary">ispF</name>
    <name type="ordered locus">CTL0693</name>
</gene>
<reference key="1">
    <citation type="journal article" date="2008" name="Genome Res.">
        <title>Chlamydia trachomatis: genome sequence analysis of lymphogranuloma venereum isolates.</title>
        <authorList>
            <person name="Thomson N.R."/>
            <person name="Holden M.T.G."/>
            <person name="Carder C."/>
            <person name="Lennard N."/>
            <person name="Lockey S.J."/>
            <person name="Marsh P."/>
            <person name="Skipp P."/>
            <person name="O'Connor C.D."/>
            <person name="Goodhead I."/>
            <person name="Norbertzcak H."/>
            <person name="Harris B."/>
            <person name="Ormond D."/>
            <person name="Rance R."/>
            <person name="Quail M.A."/>
            <person name="Parkhill J."/>
            <person name="Stephens R.S."/>
            <person name="Clarke I.N."/>
        </authorList>
    </citation>
    <scope>NUCLEOTIDE SEQUENCE [LARGE SCALE GENOMIC DNA]</scope>
    <source>
        <strain>ATCC VR-902B / DSM 19102 / 434/Bu</strain>
    </source>
</reference>
<dbReference type="EC" id="4.6.1.12" evidence="1"/>
<dbReference type="EMBL" id="AM884176">
    <property type="protein sequence ID" value="CAP04132.1"/>
    <property type="molecule type" value="Genomic_DNA"/>
</dbReference>
<dbReference type="RefSeq" id="WP_009871789.1">
    <property type="nucleotide sequence ID" value="NC_010287.1"/>
</dbReference>
<dbReference type="RefSeq" id="YP_001654765.1">
    <property type="nucleotide sequence ID" value="NC_010287.1"/>
</dbReference>
<dbReference type="SMR" id="B0B806"/>
<dbReference type="KEGG" id="ctb:CTL0693"/>
<dbReference type="PATRIC" id="fig|471472.4.peg.745"/>
<dbReference type="HOGENOM" id="CLU_084630_2_0_0"/>
<dbReference type="UniPathway" id="UPA00056">
    <property type="reaction ID" value="UER00095"/>
</dbReference>
<dbReference type="Proteomes" id="UP001154402">
    <property type="component" value="Chromosome"/>
</dbReference>
<dbReference type="GO" id="GO:0008685">
    <property type="term" value="F:2-C-methyl-D-erythritol 2,4-cyclodiphosphate synthase activity"/>
    <property type="evidence" value="ECO:0007669"/>
    <property type="project" value="UniProtKB-UniRule"/>
</dbReference>
<dbReference type="GO" id="GO:0046872">
    <property type="term" value="F:metal ion binding"/>
    <property type="evidence" value="ECO:0007669"/>
    <property type="project" value="UniProtKB-KW"/>
</dbReference>
<dbReference type="GO" id="GO:0019288">
    <property type="term" value="P:isopentenyl diphosphate biosynthetic process, methylerythritol 4-phosphate pathway"/>
    <property type="evidence" value="ECO:0007669"/>
    <property type="project" value="UniProtKB-UniRule"/>
</dbReference>
<dbReference type="GO" id="GO:0016114">
    <property type="term" value="P:terpenoid biosynthetic process"/>
    <property type="evidence" value="ECO:0007669"/>
    <property type="project" value="InterPro"/>
</dbReference>
<dbReference type="CDD" id="cd00554">
    <property type="entry name" value="MECDP_synthase"/>
    <property type="match status" value="1"/>
</dbReference>
<dbReference type="FunFam" id="3.30.1330.50:FF:000006">
    <property type="entry name" value="2-C-methyl-D-erythritol 2,4-cyclodiphosphate synthase"/>
    <property type="match status" value="1"/>
</dbReference>
<dbReference type="Gene3D" id="3.30.1330.50">
    <property type="entry name" value="2-C-methyl-D-erythritol 2,4-cyclodiphosphate synthase"/>
    <property type="match status" value="1"/>
</dbReference>
<dbReference type="HAMAP" id="MF_00107">
    <property type="entry name" value="IspF"/>
    <property type="match status" value="1"/>
</dbReference>
<dbReference type="InterPro" id="IPR003526">
    <property type="entry name" value="MECDP_synthase"/>
</dbReference>
<dbReference type="InterPro" id="IPR020555">
    <property type="entry name" value="MECDP_synthase_CS"/>
</dbReference>
<dbReference type="InterPro" id="IPR036571">
    <property type="entry name" value="MECDP_synthase_sf"/>
</dbReference>
<dbReference type="NCBIfam" id="TIGR00151">
    <property type="entry name" value="ispF"/>
    <property type="match status" value="1"/>
</dbReference>
<dbReference type="PANTHER" id="PTHR43181">
    <property type="entry name" value="2-C-METHYL-D-ERYTHRITOL 2,4-CYCLODIPHOSPHATE SYNTHASE, CHLOROPLASTIC"/>
    <property type="match status" value="1"/>
</dbReference>
<dbReference type="PANTHER" id="PTHR43181:SF1">
    <property type="entry name" value="2-C-METHYL-D-ERYTHRITOL 2,4-CYCLODIPHOSPHATE SYNTHASE, CHLOROPLASTIC"/>
    <property type="match status" value="1"/>
</dbReference>
<dbReference type="Pfam" id="PF02542">
    <property type="entry name" value="YgbB"/>
    <property type="match status" value="1"/>
</dbReference>
<dbReference type="SUPFAM" id="SSF69765">
    <property type="entry name" value="IpsF-like"/>
    <property type="match status" value="1"/>
</dbReference>
<dbReference type="PROSITE" id="PS01350">
    <property type="entry name" value="ISPF"/>
    <property type="match status" value="1"/>
</dbReference>
<accession>B0B806</accession>
<sequence>MTEIPSSFVLPDPEWIYRVGIGQDSHRFLPDEDPKPCILGGIIFENTPGFEANSDGDVVFHAICNAFSSVTHKGILGGLADELLKTKGITDSVVYLQEAVASLKPTQRVSHLAITIEGKRPKLLPQLPSMRKRIAEVLHIPLDSINITATSGEGLTAMGQGYGVQCFCVLTIMEYCRY</sequence>
<evidence type="ECO:0000255" key="1">
    <source>
        <dbReference type="HAMAP-Rule" id="MF_00107"/>
    </source>
</evidence>